<feature type="peptide" id="PRO_0000378902" description="Sulfakinin-1" evidence="3">
    <location>
        <begin position="1"/>
        <end position="11"/>
    </location>
</feature>
<feature type="modified residue" description="Sulfotyrosine" evidence="1">
    <location>
        <position position="6"/>
    </location>
</feature>
<feature type="modified residue" description="Phenylalanine amide" evidence="3">
    <location>
        <position position="11"/>
    </location>
</feature>
<proteinExistence type="evidence at protein level"/>
<evidence type="ECO:0000250" key="1">
    <source>
        <dbReference type="UniProtKB" id="P41493"/>
    </source>
</evidence>
<evidence type="ECO:0000255" key="2"/>
<evidence type="ECO:0000269" key="3">
    <source>
    </source>
</evidence>
<evidence type="ECO:0000303" key="4">
    <source>
    </source>
</evidence>
<evidence type="ECO:0000305" key="5"/>
<keyword id="KW-0027">Amidation</keyword>
<keyword id="KW-0903">Direct protein sequencing</keyword>
<keyword id="KW-0372">Hormone</keyword>
<keyword id="KW-0527">Neuropeptide</keyword>
<keyword id="KW-0964">Secreted</keyword>
<keyword id="KW-0765">Sulfation</keyword>
<protein>
    <recommendedName>
        <fullName evidence="4">Sulfakinin-1</fullName>
        <shortName evidence="4">ThePe-SK-1</shortName>
    </recommendedName>
</protein>
<comment type="function">
    <text evidence="1">Myotropic peptide.</text>
</comment>
<comment type="subcellular location">
    <subcellularLocation>
        <location evidence="5">Secreted</location>
    </subcellularLocation>
</comment>
<comment type="similarity">
    <text evidence="2">Belongs to the gastrin/cholecystokinin family.</text>
</comment>
<accession>P85792</accession>
<dbReference type="GO" id="GO:0005576">
    <property type="term" value="C:extracellular region"/>
    <property type="evidence" value="ECO:0007669"/>
    <property type="project" value="UniProtKB-SubCell"/>
</dbReference>
<dbReference type="GO" id="GO:0005179">
    <property type="term" value="F:hormone activity"/>
    <property type="evidence" value="ECO:0007669"/>
    <property type="project" value="UniProtKB-KW"/>
</dbReference>
<dbReference type="GO" id="GO:0007218">
    <property type="term" value="P:neuropeptide signaling pathway"/>
    <property type="evidence" value="ECO:0007669"/>
    <property type="project" value="UniProtKB-KW"/>
</dbReference>
<dbReference type="InterPro" id="IPR013152">
    <property type="entry name" value="Gastrin/cholecystokinin_CS"/>
</dbReference>
<dbReference type="InterPro" id="IPR013259">
    <property type="entry name" value="Sulfakinin"/>
</dbReference>
<dbReference type="Pfam" id="PF08257">
    <property type="entry name" value="Sulfakinin"/>
    <property type="match status" value="1"/>
</dbReference>
<dbReference type="PROSITE" id="PS00259">
    <property type="entry name" value="GASTRIN"/>
    <property type="match status" value="1"/>
</dbReference>
<organism>
    <name type="scientific">Therea petiveriana</name>
    <name type="common">Domino cockroach</name>
    <dbReference type="NCBI Taxonomy" id="45965"/>
    <lineage>
        <taxon>Eukaryota</taxon>
        <taxon>Metazoa</taxon>
        <taxon>Ecdysozoa</taxon>
        <taxon>Arthropoda</taxon>
        <taxon>Hexapoda</taxon>
        <taxon>Insecta</taxon>
        <taxon>Pterygota</taxon>
        <taxon>Neoptera</taxon>
        <taxon>Polyneoptera</taxon>
        <taxon>Dictyoptera</taxon>
        <taxon>Blattodea</taxon>
        <taxon>Corydioidea</taxon>
        <taxon>Corydiidae</taxon>
        <taxon>Therea</taxon>
    </lineage>
</organism>
<name>SK1_THEPT</name>
<reference evidence="5" key="1">
    <citation type="journal article" date="2009" name="BMC Evol. Biol.">
        <title>A proteomic approach for studying insect phylogeny: CAPA peptides of ancient insect taxa (Dictyoptera, Blattoptera) as a test case.</title>
        <authorList>
            <person name="Roth S."/>
            <person name="Fromm B."/>
            <person name="Gaede G."/>
            <person name="Predel R."/>
        </authorList>
    </citation>
    <scope>PROTEIN SEQUENCE</scope>
    <scope>AMIDATION AT PHE-11</scope>
    <source>
        <tissue evidence="3">Corpora cardiaca</tissue>
    </source>
</reference>
<sequence>EQFDDYGHMRF</sequence>